<feature type="initiator methionine" description="Removed" evidence="3">
    <location>
        <position position="1"/>
    </location>
</feature>
<feature type="chain" id="PRO_0000055279" description="Histone H2A">
    <location>
        <begin position="2"/>
        <end position="124"/>
    </location>
</feature>
<feature type="region of interest" description="Disordered" evidence="2">
    <location>
        <begin position="1"/>
        <end position="23"/>
    </location>
</feature>
<feature type="compositionally biased region" description="Basic residues" evidence="2">
    <location>
        <begin position="1"/>
        <end position="18"/>
    </location>
</feature>
<feature type="modified residue" description="N-acetylserine" evidence="3">
    <location>
        <position position="2"/>
    </location>
</feature>
<feature type="modified residue" description="Phosphoserine" evidence="3">
    <location>
        <position position="2"/>
    </location>
</feature>
<feature type="modified residue" description="N5-methylglutamine" evidence="1">
    <location>
        <position position="104"/>
    </location>
</feature>
<accession>P02270</accession>
<organism>
    <name type="scientific">Sipunculus nudus</name>
    <name type="common">Sipunculan worm</name>
    <dbReference type="NCBI Taxonomy" id="6446"/>
    <lineage>
        <taxon>Eukaryota</taxon>
        <taxon>Metazoa</taxon>
        <taxon>Spiralia</taxon>
        <taxon>Lophotrochozoa</taxon>
        <taxon>Annelida</taxon>
        <taxon>Sipuncula</taxon>
        <taxon>Sipunculidea</taxon>
        <taxon>Golfingiida</taxon>
        <taxon>Sipunculidae</taxon>
        <taxon>Sipunculus</taxon>
    </lineage>
</organism>
<name>H2A_SIPNU</name>
<reference key="1">
    <citation type="journal article" date="1983" name="Eur. J. Biochem.">
        <title>Primary structure of histone H2A from nucleated erythrocyte of the marine worm Sipunculus nudus. Presence of two forms of H2A in the sipunculid chromatin.</title>
        <authorList>
            <person name="Kmiecik D."/>
            <person name="Couppez M."/>
            <person name="Belaiche D."/>
            <person name="Sautiere P."/>
        </authorList>
    </citation>
    <scope>PROTEIN SEQUENCE OF 2-124</scope>
    <scope>ACETYLATION AT SER-2</scope>
    <scope>PHOSPHORYLATION AT SER-2</scope>
    <source>
        <tissue>Erythrocyte</tissue>
    </source>
</reference>
<proteinExistence type="evidence at protein level"/>
<keyword id="KW-0007">Acetylation</keyword>
<keyword id="KW-0158">Chromosome</keyword>
<keyword id="KW-0903">Direct protein sequencing</keyword>
<keyword id="KW-0238">DNA-binding</keyword>
<keyword id="KW-0488">Methylation</keyword>
<keyword id="KW-0544">Nucleosome core</keyword>
<keyword id="KW-0539">Nucleus</keyword>
<keyword id="KW-0597">Phosphoprotein</keyword>
<dbReference type="PIR" id="A02597">
    <property type="entry name" value="HSIN21"/>
</dbReference>
<dbReference type="SMR" id="P02270"/>
<dbReference type="iPTMnet" id="P02270"/>
<dbReference type="GO" id="GO:0000786">
    <property type="term" value="C:nucleosome"/>
    <property type="evidence" value="ECO:0007669"/>
    <property type="project" value="UniProtKB-KW"/>
</dbReference>
<dbReference type="GO" id="GO:0005634">
    <property type="term" value="C:nucleus"/>
    <property type="evidence" value="ECO:0007669"/>
    <property type="project" value="UniProtKB-SubCell"/>
</dbReference>
<dbReference type="GO" id="GO:0003677">
    <property type="term" value="F:DNA binding"/>
    <property type="evidence" value="ECO:0007669"/>
    <property type="project" value="UniProtKB-KW"/>
</dbReference>
<dbReference type="GO" id="GO:0046982">
    <property type="term" value="F:protein heterodimerization activity"/>
    <property type="evidence" value="ECO:0007669"/>
    <property type="project" value="InterPro"/>
</dbReference>
<dbReference type="GO" id="GO:0030527">
    <property type="term" value="F:structural constituent of chromatin"/>
    <property type="evidence" value="ECO:0007669"/>
    <property type="project" value="InterPro"/>
</dbReference>
<dbReference type="CDD" id="cd00074">
    <property type="entry name" value="HFD_H2A"/>
    <property type="match status" value="1"/>
</dbReference>
<dbReference type="FunFam" id="1.10.20.10:FF:000020">
    <property type="entry name" value="Histone H2A"/>
    <property type="match status" value="1"/>
</dbReference>
<dbReference type="Gene3D" id="1.10.20.10">
    <property type="entry name" value="Histone, subunit A"/>
    <property type="match status" value="1"/>
</dbReference>
<dbReference type="InterPro" id="IPR009072">
    <property type="entry name" value="Histone-fold"/>
</dbReference>
<dbReference type="InterPro" id="IPR002119">
    <property type="entry name" value="Histone_H2A"/>
</dbReference>
<dbReference type="InterPro" id="IPR007125">
    <property type="entry name" value="Histone_H2A/H2B/H3"/>
</dbReference>
<dbReference type="InterPro" id="IPR032454">
    <property type="entry name" value="Histone_H2A_C"/>
</dbReference>
<dbReference type="InterPro" id="IPR032458">
    <property type="entry name" value="Histone_H2A_CS"/>
</dbReference>
<dbReference type="PANTHER" id="PTHR23430">
    <property type="entry name" value="HISTONE H2A"/>
    <property type="match status" value="1"/>
</dbReference>
<dbReference type="Pfam" id="PF00125">
    <property type="entry name" value="Histone"/>
    <property type="match status" value="1"/>
</dbReference>
<dbReference type="Pfam" id="PF16211">
    <property type="entry name" value="Histone_H2A_C"/>
    <property type="match status" value="1"/>
</dbReference>
<dbReference type="PRINTS" id="PR00620">
    <property type="entry name" value="HISTONEH2A"/>
</dbReference>
<dbReference type="SMART" id="SM00414">
    <property type="entry name" value="H2A"/>
    <property type="match status" value="1"/>
</dbReference>
<dbReference type="SUPFAM" id="SSF47113">
    <property type="entry name" value="Histone-fold"/>
    <property type="match status" value="1"/>
</dbReference>
<dbReference type="PROSITE" id="PS00046">
    <property type="entry name" value="HISTONE_H2A"/>
    <property type="match status" value="1"/>
</dbReference>
<protein>
    <recommendedName>
        <fullName>Histone H2A</fullName>
    </recommendedName>
</protein>
<evidence type="ECO:0000250" key="1"/>
<evidence type="ECO:0000256" key="2">
    <source>
        <dbReference type="SAM" id="MobiDB-lite"/>
    </source>
</evidence>
<evidence type="ECO:0000269" key="3">
    <source>
    </source>
</evidence>
<evidence type="ECO:0000305" key="4"/>
<comment type="function">
    <text>Core component of nucleosome. Nucleosomes wrap and compact DNA into chromatin, limiting DNA accessibility to the cellular machineries which require DNA as a template. Histones thereby play a central role in transcription regulation, DNA repair, DNA replication and chromosomal stability. DNA accessibility is regulated via a complex set of post-translational modifications of histones, also called histone code, and nucleosome remodeling.</text>
</comment>
<comment type="subunit">
    <text>The nucleosome is a histone octamer containing two molecules each of H2A, H2B, H3 and H4 assembled in one H3-H4 heterotetramer and two H2A-H2B heterodimers. The octamer wraps approximately 147 bp of DNA.</text>
</comment>
<comment type="subcellular location">
    <subcellularLocation>
        <location>Nucleus</location>
    </subcellularLocation>
    <subcellularLocation>
        <location>Chromosome</location>
    </subcellularLocation>
</comment>
<comment type="PTM">
    <text evidence="3">The N-terminal serine is acetylated. That serine is also phosphorylated in approximately 60% of the molecules isolated from erythrocytes.</text>
</comment>
<comment type="similarity">
    <text evidence="4">Belongs to the histone H2A family.</text>
</comment>
<sequence>MSGRGKGGKAKGKSKSRSSRAGLQFPVGRIHRLLRKGNYAERIGAGAPVYLAAVMEYLAAEVLELAGNAARDNKKTRIIPRHLQLAIRNDEELNKLLSGVTIAQGGVLPNIQAVLLPKKTQKSK</sequence>